<feature type="signal peptide" evidence="3">
    <location>
        <begin position="1"/>
        <end position="18"/>
    </location>
</feature>
<feature type="chain" id="PRO_0000367998" description="Probable protein phosphatase 2C 79">
    <location>
        <begin position="19"/>
        <end position="385"/>
    </location>
</feature>
<feature type="domain" description="PPM-type phosphatase" evidence="4">
    <location>
        <begin position="47"/>
        <end position="356"/>
    </location>
</feature>
<feature type="binding site" evidence="1">
    <location>
        <position position="87"/>
    </location>
    <ligand>
        <name>Mn(2+)</name>
        <dbReference type="ChEBI" id="CHEBI:29035"/>
        <label>1</label>
    </ligand>
</feature>
<feature type="binding site" evidence="1">
    <location>
        <position position="87"/>
    </location>
    <ligand>
        <name>Mn(2+)</name>
        <dbReference type="ChEBI" id="CHEBI:29035"/>
        <label>2</label>
    </ligand>
</feature>
<feature type="binding site" evidence="1">
    <location>
        <position position="88"/>
    </location>
    <ligand>
        <name>Mn(2+)</name>
        <dbReference type="ChEBI" id="CHEBI:29035"/>
        <label>1</label>
    </ligand>
</feature>
<feature type="binding site" evidence="1">
    <location>
        <position position="288"/>
    </location>
    <ligand>
        <name>Mn(2+)</name>
        <dbReference type="ChEBI" id="CHEBI:29035"/>
        <label>2</label>
    </ligand>
</feature>
<feature type="binding site" evidence="1">
    <location>
        <position position="347"/>
    </location>
    <ligand>
        <name>Mn(2+)</name>
        <dbReference type="ChEBI" id="CHEBI:29035"/>
        <label>2</label>
    </ligand>
</feature>
<feature type="modified residue" description="Phosphoserine" evidence="2">
    <location>
        <position position="76"/>
    </location>
</feature>
<keyword id="KW-0378">Hydrolase</keyword>
<keyword id="KW-0460">Magnesium</keyword>
<keyword id="KW-0464">Manganese</keyword>
<keyword id="KW-0479">Metal-binding</keyword>
<keyword id="KW-0597">Phosphoprotein</keyword>
<keyword id="KW-0904">Protein phosphatase</keyword>
<keyword id="KW-1185">Reference proteome</keyword>
<keyword id="KW-0732">Signal</keyword>
<protein>
    <recommendedName>
        <fullName evidence="6">Probable protein phosphatase 2C 79</fullName>
        <shortName evidence="6">AtPP2C79</shortName>
        <ecNumber evidence="2">3.1.3.16</ecNumber>
    </recommendedName>
</protein>
<proteinExistence type="evidence at transcript level"/>
<gene>
    <name evidence="6" type="primary">PP2C79</name>
    <name evidence="7" type="synonym">PP2C-D7</name>
    <name evidence="9" type="ordered locus">At5g66080</name>
    <name evidence="10" type="ORF">K2A18.16</name>
</gene>
<dbReference type="EC" id="3.1.3.16" evidence="2"/>
<dbReference type="EMBL" id="AB011474">
    <property type="protein sequence ID" value="BAB10413.1"/>
    <property type="molecule type" value="Genomic_DNA"/>
</dbReference>
<dbReference type="EMBL" id="CP002688">
    <property type="protein sequence ID" value="AED98157.1"/>
    <property type="molecule type" value="Genomic_DNA"/>
</dbReference>
<dbReference type="EMBL" id="AY062587">
    <property type="protein sequence ID" value="AAL32665.1"/>
    <property type="molecule type" value="mRNA"/>
</dbReference>
<dbReference type="EMBL" id="BT001229">
    <property type="protein sequence ID" value="AAN65116.1"/>
    <property type="molecule type" value="mRNA"/>
</dbReference>
<dbReference type="RefSeq" id="NP_201409.1">
    <property type="nucleotide sequence ID" value="NM_126006.4"/>
</dbReference>
<dbReference type="SMR" id="Q9FKX4"/>
<dbReference type="BioGRID" id="21982">
    <property type="interactions" value="2"/>
</dbReference>
<dbReference type="FunCoup" id="Q9FKX4">
    <property type="interactions" value="2709"/>
</dbReference>
<dbReference type="IntAct" id="Q9FKX4">
    <property type="interactions" value="2"/>
</dbReference>
<dbReference type="MINT" id="Q9FKX4"/>
<dbReference type="STRING" id="3702.Q9FKX4"/>
<dbReference type="iPTMnet" id="Q9FKX4"/>
<dbReference type="PaxDb" id="3702-AT5G66080.1"/>
<dbReference type="EnsemblPlants" id="AT5G66080.1">
    <property type="protein sequence ID" value="AT5G66080.1"/>
    <property type="gene ID" value="AT5G66080"/>
</dbReference>
<dbReference type="GeneID" id="836740"/>
<dbReference type="Gramene" id="AT5G66080.1">
    <property type="protein sequence ID" value="AT5G66080.1"/>
    <property type="gene ID" value="AT5G66080"/>
</dbReference>
<dbReference type="KEGG" id="ath:AT5G66080"/>
<dbReference type="Araport" id="AT5G66080"/>
<dbReference type="TAIR" id="AT5G66080">
    <property type="gene designation" value="APD9"/>
</dbReference>
<dbReference type="eggNOG" id="KOG0700">
    <property type="taxonomic scope" value="Eukaryota"/>
</dbReference>
<dbReference type="HOGENOM" id="CLU_013173_2_0_1"/>
<dbReference type="InParanoid" id="Q9FKX4"/>
<dbReference type="OMA" id="ISMHEIQ"/>
<dbReference type="OrthoDB" id="420076at2759"/>
<dbReference type="PhylomeDB" id="Q9FKX4"/>
<dbReference type="PRO" id="PR:Q9FKX4"/>
<dbReference type="Proteomes" id="UP000006548">
    <property type="component" value="Chromosome 5"/>
</dbReference>
<dbReference type="ExpressionAtlas" id="Q9FKX4">
    <property type="expression patterns" value="baseline and differential"/>
</dbReference>
<dbReference type="GO" id="GO:0005886">
    <property type="term" value="C:plasma membrane"/>
    <property type="evidence" value="ECO:0000314"/>
    <property type="project" value="TAIR"/>
</dbReference>
<dbReference type="GO" id="GO:0046872">
    <property type="term" value="F:metal ion binding"/>
    <property type="evidence" value="ECO:0007669"/>
    <property type="project" value="UniProtKB-KW"/>
</dbReference>
<dbReference type="GO" id="GO:0004722">
    <property type="term" value="F:protein serine/threonine phosphatase activity"/>
    <property type="evidence" value="ECO:0007669"/>
    <property type="project" value="UniProtKB-EC"/>
</dbReference>
<dbReference type="GO" id="GO:1900036">
    <property type="term" value="P:positive regulation of cellular response to heat"/>
    <property type="evidence" value="ECO:0000315"/>
    <property type="project" value="TAIR"/>
</dbReference>
<dbReference type="CDD" id="cd00143">
    <property type="entry name" value="PP2Cc"/>
    <property type="match status" value="1"/>
</dbReference>
<dbReference type="FunFam" id="3.60.40.10:FF:000008">
    <property type="entry name" value="Phosphatase 2C family protein"/>
    <property type="match status" value="1"/>
</dbReference>
<dbReference type="Gene3D" id="3.60.40.10">
    <property type="entry name" value="PPM-type phosphatase domain"/>
    <property type="match status" value="1"/>
</dbReference>
<dbReference type="InterPro" id="IPR015655">
    <property type="entry name" value="PP2C"/>
</dbReference>
<dbReference type="InterPro" id="IPR000222">
    <property type="entry name" value="PP2C_BS"/>
</dbReference>
<dbReference type="InterPro" id="IPR036457">
    <property type="entry name" value="PPM-type-like_dom_sf"/>
</dbReference>
<dbReference type="InterPro" id="IPR001932">
    <property type="entry name" value="PPM-type_phosphatase-like_dom"/>
</dbReference>
<dbReference type="PANTHER" id="PTHR47992">
    <property type="entry name" value="PROTEIN PHOSPHATASE"/>
    <property type="match status" value="1"/>
</dbReference>
<dbReference type="Pfam" id="PF00481">
    <property type="entry name" value="PP2C"/>
    <property type="match status" value="1"/>
</dbReference>
<dbReference type="SMART" id="SM00332">
    <property type="entry name" value="PP2Cc"/>
    <property type="match status" value="1"/>
</dbReference>
<dbReference type="SUPFAM" id="SSF81606">
    <property type="entry name" value="PP2C-like"/>
    <property type="match status" value="1"/>
</dbReference>
<dbReference type="PROSITE" id="PS01032">
    <property type="entry name" value="PPM_1"/>
    <property type="match status" value="1"/>
</dbReference>
<dbReference type="PROSITE" id="PS51746">
    <property type="entry name" value="PPM_2"/>
    <property type="match status" value="1"/>
</dbReference>
<name>P2C79_ARATH</name>
<comment type="function">
    <text evidence="5">May dephosphorylate and repress plasma membrane H(+)-ATPases (PM H(+)-ATPases, e.g. AHA1 and AHA2), thus influencing negatively plant growth and fitness.</text>
</comment>
<comment type="catalytic activity">
    <reaction evidence="2">
        <text>O-phospho-L-seryl-[protein] + H2O = L-seryl-[protein] + phosphate</text>
        <dbReference type="Rhea" id="RHEA:20629"/>
        <dbReference type="Rhea" id="RHEA-COMP:9863"/>
        <dbReference type="Rhea" id="RHEA-COMP:11604"/>
        <dbReference type="ChEBI" id="CHEBI:15377"/>
        <dbReference type="ChEBI" id="CHEBI:29999"/>
        <dbReference type="ChEBI" id="CHEBI:43474"/>
        <dbReference type="ChEBI" id="CHEBI:83421"/>
        <dbReference type="EC" id="3.1.3.16"/>
    </reaction>
</comment>
<comment type="catalytic activity">
    <reaction evidence="2">
        <text>O-phospho-L-threonyl-[protein] + H2O = L-threonyl-[protein] + phosphate</text>
        <dbReference type="Rhea" id="RHEA:47004"/>
        <dbReference type="Rhea" id="RHEA-COMP:11060"/>
        <dbReference type="Rhea" id="RHEA-COMP:11605"/>
        <dbReference type="ChEBI" id="CHEBI:15377"/>
        <dbReference type="ChEBI" id="CHEBI:30013"/>
        <dbReference type="ChEBI" id="CHEBI:43474"/>
        <dbReference type="ChEBI" id="CHEBI:61977"/>
        <dbReference type="EC" id="3.1.3.16"/>
    </reaction>
</comment>
<comment type="cofactor">
    <cofactor evidence="1">
        <name>Mg(2+)</name>
        <dbReference type="ChEBI" id="CHEBI:18420"/>
    </cofactor>
    <cofactor evidence="1">
        <name>Mn(2+)</name>
        <dbReference type="ChEBI" id="CHEBI:29035"/>
    </cofactor>
    <text evidence="1">Binds 2 magnesium or manganese ions per subunit.</text>
</comment>
<comment type="disruption phenotype">
    <text evidence="5">Plants missing PP2C42/PP2C-D2, PP2C64/PP2C-D5, PP2C79/PP2C-D7, PP2C63/PP2C-D8 and PP2C68/PP2C-D9 exhibit an increased hypocotyl length, as well as an enhanced sensitivity to LiCl and media acidification.</text>
</comment>
<comment type="similarity">
    <text evidence="8">Belongs to the PP2C family.</text>
</comment>
<sequence length="385" mass="42963">MLSLFFNFLTSCLWPSSSTTSHTYSDSKGKQDGLLWYKDSAHHLFGDFSMAVVQANNLLEDQSQVESGPLTTLSSSGPYGTFVGVYDGHGGPETSRFVNDHLFHHLKRFAAEQDSMSVDVIRKAYEATEEGFLGVVAKQWAVKPHIAAVGSCCLIGVVCDGKLYVANVGDSRAVLGKVIKATGEVNALQLSAEHNVSIESVRQEMHSLHPDDSHIVVLKHNVWRVKGIIQVSRSIGDVYLKKSEFNKEPLYTKYRLREPMKRPILSWEPSITVHDLQPDDQFLIFASDGLWEQLSNQEAVEIVQNHPRNGIARRLVKAALQEAAKKREMRYSDLNKIERGVRRHFHDDITVVVLFLDTNLLSRASSLKTPSVSIRGGGITLPKKL</sequence>
<accession>Q9FKX4</accession>
<reference key="1">
    <citation type="journal article" date="1998" name="DNA Res.">
        <title>Structural analysis of Arabidopsis thaliana chromosome 5. V. Sequence features of the regions of 1,381,565 bp covered by twenty one physically assigned P1 and TAC clones.</title>
        <authorList>
            <person name="Kaneko T."/>
            <person name="Kotani H."/>
            <person name="Nakamura Y."/>
            <person name="Sato S."/>
            <person name="Asamizu E."/>
            <person name="Miyajima N."/>
            <person name="Tabata S."/>
        </authorList>
    </citation>
    <scope>NUCLEOTIDE SEQUENCE [LARGE SCALE GENOMIC DNA]</scope>
    <source>
        <strain>cv. Columbia</strain>
    </source>
</reference>
<reference key="2">
    <citation type="journal article" date="2017" name="Plant J.">
        <title>Araport11: a complete reannotation of the Arabidopsis thaliana reference genome.</title>
        <authorList>
            <person name="Cheng C.Y."/>
            <person name="Krishnakumar V."/>
            <person name="Chan A.P."/>
            <person name="Thibaud-Nissen F."/>
            <person name="Schobel S."/>
            <person name="Town C.D."/>
        </authorList>
    </citation>
    <scope>GENOME REANNOTATION</scope>
    <source>
        <strain>cv. Columbia</strain>
    </source>
</reference>
<reference key="3">
    <citation type="journal article" date="2003" name="Science">
        <title>Empirical analysis of transcriptional activity in the Arabidopsis genome.</title>
        <authorList>
            <person name="Yamada K."/>
            <person name="Lim J."/>
            <person name="Dale J.M."/>
            <person name="Chen H."/>
            <person name="Shinn P."/>
            <person name="Palm C.J."/>
            <person name="Southwick A.M."/>
            <person name="Wu H.C."/>
            <person name="Kim C.J."/>
            <person name="Nguyen M."/>
            <person name="Pham P.K."/>
            <person name="Cheuk R.F."/>
            <person name="Karlin-Newmann G."/>
            <person name="Liu S.X."/>
            <person name="Lam B."/>
            <person name="Sakano H."/>
            <person name="Wu T."/>
            <person name="Yu G."/>
            <person name="Miranda M."/>
            <person name="Quach H.L."/>
            <person name="Tripp M."/>
            <person name="Chang C.H."/>
            <person name="Lee J.M."/>
            <person name="Toriumi M.J."/>
            <person name="Chan M.M."/>
            <person name="Tang C.C."/>
            <person name="Onodera C.S."/>
            <person name="Deng J.M."/>
            <person name="Akiyama K."/>
            <person name="Ansari Y."/>
            <person name="Arakawa T."/>
            <person name="Banh J."/>
            <person name="Banno F."/>
            <person name="Bowser L."/>
            <person name="Brooks S.Y."/>
            <person name="Carninci P."/>
            <person name="Chao Q."/>
            <person name="Choy N."/>
            <person name="Enju A."/>
            <person name="Goldsmith A.D."/>
            <person name="Gurjal M."/>
            <person name="Hansen N.F."/>
            <person name="Hayashizaki Y."/>
            <person name="Johnson-Hopson C."/>
            <person name="Hsuan V.W."/>
            <person name="Iida K."/>
            <person name="Karnes M."/>
            <person name="Khan S."/>
            <person name="Koesema E."/>
            <person name="Ishida J."/>
            <person name="Jiang P.X."/>
            <person name="Jones T."/>
            <person name="Kawai J."/>
            <person name="Kamiya A."/>
            <person name="Meyers C."/>
            <person name="Nakajima M."/>
            <person name="Narusaka M."/>
            <person name="Seki M."/>
            <person name="Sakurai T."/>
            <person name="Satou M."/>
            <person name="Tamse R."/>
            <person name="Vaysberg M."/>
            <person name="Wallender E.K."/>
            <person name="Wong C."/>
            <person name="Yamamura Y."/>
            <person name="Yuan S."/>
            <person name="Shinozaki K."/>
            <person name="Davis R.W."/>
            <person name="Theologis A."/>
            <person name="Ecker J.R."/>
        </authorList>
    </citation>
    <scope>NUCLEOTIDE SEQUENCE [LARGE SCALE MRNA]</scope>
    <source>
        <strain>cv. Columbia</strain>
    </source>
</reference>
<reference key="4">
    <citation type="journal article" date="2008" name="BMC Genomics">
        <title>Genome-wide and expression analysis of protein phosphatase 2C in rice and Arabidopsis.</title>
        <authorList>
            <person name="Xue T."/>
            <person name="Wang D."/>
            <person name="Zhang S."/>
            <person name="Ehlting J."/>
            <person name="Ni F."/>
            <person name="Jacab S."/>
            <person name="Zheng C."/>
            <person name="Zhong Y."/>
        </authorList>
    </citation>
    <scope>GENE FAMILY</scope>
    <scope>NOMENCLATURE</scope>
</reference>
<reference key="5">
    <citation type="journal article" date="2014" name="Plant Cell">
        <title>SAUR inhibition of PP2C-D phosphatases activates plasma membrane H+-ATPases to promote cell expansion in Arabidopsis.</title>
        <authorList>
            <person name="Spartz A.K."/>
            <person name="Ren H."/>
            <person name="Park M.Y."/>
            <person name="Grandt K.N."/>
            <person name="Lee S.H."/>
            <person name="Murphy A.S."/>
            <person name="Sussman M.R."/>
            <person name="Overvoorde P.J."/>
            <person name="Gray W.M."/>
        </authorList>
    </citation>
    <scope>FUNCTION</scope>
    <scope>DISRUPTION PHENOTYPE</scope>
    <scope>GENE FAMILY</scope>
    <scope>NOMENCLATURE</scope>
    <source>
        <strain>cv. Columbia</strain>
    </source>
</reference>
<organism>
    <name type="scientific">Arabidopsis thaliana</name>
    <name type="common">Mouse-ear cress</name>
    <dbReference type="NCBI Taxonomy" id="3702"/>
    <lineage>
        <taxon>Eukaryota</taxon>
        <taxon>Viridiplantae</taxon>
        <taxon>Streptophyta</taxon>
        <taxon>Embryophyta</taxon>
        <taxon>Tracheophyta</taxon>
        <taxon>Spermatophyta</taxon>
        <taxon>Magnoliopsida</taxon>
        <taxon>eudicotyledons</taxon>
        <taxon>Gunneridae</taxon>
        <taxon>Pentapetalae</taxon>
        <taxon>rosids</taxon>
        <taxon>malvids</taxon>
        <taxon>Brassicales</taxon>
        <taxon>Brassicaceae</taxon>
        <taxon>Camelineae</taxon>
        <taxon>Arabidopsis</taxon>
    </lineage>
</organism>
<evidence type="ECO:0000250" key="1">
    <source>
        <dbReference type="UniProtKB" id="P35813"/>
    </source>
</evidence>
<evidence type="ECO:0000250" key="2">
    <source>
        <dbReference type="UniProtKB" id="Q9LHJ9"/>
    </source>
</evidence>
<evidence type="ECO:0000255" key="3"/>
<evidence type="ECO:0000255" key="4">
    <source>
        <dbReference type="PROSITE-ProRule" id="PRU01082"/>
    </source>
</evidence>
<evidence type="ECO:0000269" key="5">
    <source>
    </source>
</evidence>
<evidence type="ECO:0000303" key="6">
    <source>
    </source>
</evidence>
<evidence type="ECO:0000303" key="7">
    <source>
    </source>
</evidence>
<evidence type="ECO:0000305" key="8"/>
<evidence type="ECO:0000312" key="9">
    <source>
        <dbReference type="Araport" id="AT5G66080"/>
    </source>
</evidence>
<evidence type="ECO:0000312" key="10">
    <source>
        <dbReference type="EMBL" id="BAB10413.1"/>
    </source>
</evidence>